<dbReference type="EMBL" id="X89480">
    <property type="protein sequence ID" value="CAA61669.1"/>
    <property type="molecule type" value="mRNA"/>
</dbReference>
<dbReference type="EMBL" id="Y11026">
    <property type="protein sequence ID" value="CAA71910.1"/>
    <property type="molecule type" value="mRNA"/>
</dbReference>
<dbReference type="PIR" id="S58082">
    <property type="entry name" value="S58082"/>
</dbReference>
<dbReference type="RefSeq" id="NP_999375.1">
    <molecule id="Q29102-1"/>
    <property type="nucleotide sequence ID" value="NM_214210.1"/>
</dbReference>
<dbReference type="FunCoup" id="Q29102">
    <property type="interactions" value="132"/>
</dbReference>
<dbReference type="STRING" id="9823.ENSSSCP00000047204"/>
<dbReference type="GlyCosmos" id="Q29102">
    <property type="glycosylation" value="3 sites, No reported glycans"/>
</dbReference>
<dbReference type="GlyGen" id="Q29102">
    <property type="glycosylation" value="3 sites"/>
</dbReference>
<dbReference type="PaxDb" id="9823-ENSSSCP00000011194"/>
<dbReference type="Ensembl" id="ENSSSCT00000037256.3">
    <molecule id="Q29102-1"/>
    <property type="protein sequence ID" value="ENSSSCP00000034539.2"/>
    <property type="gene ID" value="ENSSSCG00000010506.5"/>
</dbReference>
<dbReference type="Ensembl" id="ENSSSCT00090055403">
    <molecule id="Q29102-1"/>
    <property type="protein sequence ID" value="ENSSSCP00090034498"/>
    <property type="gene ID" value="ENSSSCG00090031190"/>
</dbReference>
<dbReference type="Ensembl" id="ENSSSCT00105077425">
    <molecule id="Q29102-1"/>
    <property type="protein sequence ID" value="ENSSSCP00105054774"/>
    <property type="gene ID" value="ENSSSCG00105040602"/>
</dbReference>
<dbReference type="Ensembl" id="ENSSSCT00115023488">
    <molecule id="Q29102-1"/>
    <property type="protein sequence ID" value="ENSSSCP00115022264"/>
    <property type="gene ID" value="ENSSSCG00115013407"/>
</dbReference>
<dbReference type="Ensembl" id="ENSSSCT00130051126">
    <molecule id="Q29102-1"/>
    <property type="protein sequence ID" value="ENSSSCP00130036377"/>
    <property type="gene ID" value="ENSSSCG00130026195"/>
</dbReference>
<dbReference type="GeneID" id="397416"/>
<dbReference type="KEGG" id="ssc:397416"/>
<dbReference type="CTD" id="93377"/>
<dbReference type="eggNOG" id="ENOG502RWAT">
    <property type="taxonomic scope" value="Eukaryota"/>
</dbReference>
<dbReference type="GeneTree" id="ENSGT00390000009395"/>
<dbReference type="HOGENOM" id="CLU_1824653_0_0_1"/>
<dbReference type="InParanoid" id="Q29102"/>
<dbReference type="OrthoDB" id="9831411at2759"/>
<dbReference type="TreeFam" id="TF337818"/>
<dbReference type="Proteomes" id="UP000008227">
    <property type="component" value="Chromosome 14"/>
</dbReference>
<dbReference type="Proteomes" id="UP000314985">
    <property type="component" value="Unplaced"/>
</dbReference>
<dbReference type="Proteomes" id="UP000694570">
    <property type="component" value="Unplaced"/>
</dbReference>
<dbReference type="Proteomes" id="UP000694571">
    <property type="component" value="Unplaced"/>
</dbReference>
<dbReference type="Proteomes" id="UP000694720">
    <property type="component" value="Unplaced"/>
</dbReference>
<dbReference type="Proteomes" id="UP000694722">
    <property type="component" value="Unplaced"/>
</dbReference>
<dbReference type="Proteomes" id="UP000694723">
    <property type="component" value="Unplaced"/>
</dbReference>
<dbReference type="Proteomes" id="UP000694724">
    <property type="component" value="Unplaced"/>
</dbReference>
<dbReference type="Proteomes" id="UP000694725">
    <property type="component" value="Unplaced"/>
</dbReference>
<dbReference type="Proteomes" id="UP000694726">
    <property type="component" value="Unplaced"/>
</dbReference>
<dbReference type="Proteomes" id="UP000694727">
    <property type="component" value="Unplaced"/>
</dbReference>
<dbReference type="Proteomes" id="UP000694728">
    <property type="component" value="Unplaced"/>
</dbReference>
<dbReference type="GO" id="GO:0005737">
    <property type="term" value="C:cytoplasm"/>
    <property type="evidence" value="ECO:0007669"/>
    <property type="project" value="UniProtKB-SubCell"/>
</dbReference>
<dbReference type="GO" id="GO:0005886">
    <property type="term" value="C:plasma membrane"/>
    <property type="evidence" value="ECO:0000250"/>
    <property type="project" value="UniProtKB"/>
</dbReference>
<dbReference type="GO" id="GO:0048713">
    <property type="term" value="P:regulation of oligodendrocyte differentiation"/>
    <property type="evidence" value="ECO:0000250"/>
    <property type="project" value="UniProtKB"/>
</dbReference>
<dbReference type="InterPro" id="IPR026609">
    <property type="entry name" value="Opalin"/>
</dbReference>
<dbReference type="PANTHER" id="PTHR21102">
    <property type="entry name" value="OPALIN"/>
    <property type="match status" value="1"/>
</dbReference>
<dbReference type="PANTHER" id="PTHR21102:SF0">
    <property type="entry name" value="OPALIN"/>
    <property type="match status" value="1"/>
</dbReference>
<keyword id="KW-0025">Alternative splicing</keyword>
<keyword id="KW-1003">Cell membrane</keyword>
<keyword id="KW-0963">Cytoplasm</keyword>
<keyword id="KW-0325">Glycoprotein</keyword>
<keyword id="KW-0472">Membrane</keyword>
<keyword id="KW-1185">Reference proteome</keyword>
<keyword id="KW-0812">Transmembrane</keyword>
<keyword id="KW-1133">Transmembrane helix</keyword>
<feature type="chain" id="PRO_0000072593" description="Opalin">
    <location>
        <begin position="1"/>
        <end position="142"/>
    </location>
</feature>
<feature type="topological domain" description="Extracellular" evidence="3">
    <location>
        <begin position="1"/>
        <end position="33"/>
    </location>
</feature>
<feature type="transmembrane region" description="Helical" evidence="3">
    <location>
        <begin position="34"/>
        <end position="54"/>
    </location>
</feature>
<feature type="topological domain" description="Cytoplasmic" evidence="3">
    <location>
        <begin position="55"/>
        <end position="142"/>
    </location>
</feature>
<feature type="region of interest" description="Required for plasma membrane localization" evidence="2">
    <location>
        <begin position="78"/>
        <end position="94"/>
    </location>
</feature>
<feature type="glycosylation site" description="N-linked (GlcNAc...) asparagine" evidence="3">
    <location>
        <position position="6"/>
    </location>
</feature>
<feature type="glycosylation site" description="N-linked (GlcNAc...) asparagine" evidence="3">
    <location>
        <position position="12"/>
    </location>
</feature>
<feature type="glycosylation site" description="O-linked (GalNAc...) threonine" evidence="1">
    <location>
        <position position="14"/>
    </location>
</feature>
<feature type="splice variant" id="VSP_003990" description="In isoform 2." evidence="5">
    <location>
        <begin position="1"/>
        <end position="96"/>
    </location>
</feature>
<evidence type="ECO:0000250" key="1"/>
<evidence type="ECO:0000250" key="2">
    <source>
        <dbReference type="UniProtKB" id="Q7M750"/>
    </source>
</evidence>
<evidence type="ECO:0000255" key="3"/>
<evidence type="ECO:0000269" key="4">
    <source>
    </source>
</evidence>
<evidence type="ECO:0000305" key="5"/>
<reference key="1">
    <citation type="journal article" date="1998" name="Eur. J. Biochem.">
        <title>Identification of a gene selectively expressed in the brain, which encodes a putative transmembrane protein and a soluble cytoplasmic isoform.</title>
        <authorList>
            <person name="Bangsow T."/>
            <person name="Schepelmann S."/>
            <person name="Martin C."/>
            <person name="May M."/>
            <person name="Oberthuer A."/>
            <person name="Perl S."/>
            <person name="Knuepfer E."/>
            <person name="Zinke H."/>
            <person name="Gassen H.G."/>
        </authorList>
    </citation>
    <scope>NUCLEOTIDE SEQUENCE [MRNA]</scope>
    <scope>TISSUE SPECIFICITY</scope>
    <scope>ALTERNATIVE SPLICING</scope>
    <scope>SUBCELLULAR LOCATION</scope>
    <source>
        <tissue>Brain</tissue>
    </source>
</reference>
<organism>
    <name type="scientific">Sus scrofa</name>
    <name type="common">Pig</name>
    <dbReference type="NCBI Taxonomy" id="9823"/>
    <lineage>
        <taxon>Eukaryota</taxon>
        <taxon>Metazoa</taxon>
        <taxon>Chordata</taxon>
        <taxon>Craniata</taxon>
        <taxon>Vertebrata</taxon>
        <taxon>Euteleostomi</taxon>
        <taxon>Mammalia</taxon>
        <taxon>Eutheria</taxon>
        <taxon>Laurasiatheria</taxon>
        <taxon>Artiodactyla</taxon>
        <taxon>Suina</taxon>
        <taxon>Suidae</taxon>
        <taxon>Sus</taxon>
    </lineage>
</organism>
<comment type="function">
    <text evidence="2">Central nervous system-specific myelin protein that increase myelin genes expression during oligodendrocyte differentiation. Promotes oligodendrocyte terminal differentiation.</text>
</comment>
<comment type="subcellular location">
    <molecule>Isoform 2</molecule>
    <subcellularLocation>
        <location evidence="4">Cytoplasm</location>
    </subcellularLocation>
</comment>
<comment type="subcellular location">
    <molecule>Isoform 1</molecule>
    <subcellularLocation>
        <location evidence="2">Cell membrane</location>
        <topology evidence="3">Single-pass type I membrane protein</topology>
    </subcellularLocation>
    <text evidence="2">In the CNS, enriched in the myelin paranodal and inner loop membranes, but not that of the PNS. Enriched in the leading edge of extending processes.</text>
</comment>
<comment type="alternative products">
    <event type="alternative splicing"/>
    <isoform>
        <id>Q29102-1</id>
        <name>1</name>
        <sequence type="displayed"/>
    </isoform>
    <isoform>
        <id>Q29102-2</id>
        <name>2</name>
        <sequence type="described" ref="VSP_003990"/>
    </isoform>
</comment>
<comment type="tissue specificity">
    <text evidence="4">Specifically expressed in brain.</text>
</comment>
<gene>
    <name type="primary">OPALIN</name>
    <name type="synonym">SP83.5</name>
    <name type="synonym">TMEM10</name>
</gene>
<proteinExistence type="evidence at transcript level"/>
<name>OPALI_PIG</name>
<sequence length="142" mass="15771">MSFSLNFTLPANTTSSPVVTSGKGADCGPSLGLAAGIPSLVATALLVALLLILIHRRRRSSESTEEIERPCEISEIYDNPRVAENPRRSPTHEKNIMGAEEAHIYVKTVSGSQEPMRDTYRPAVEMERRRGLWWLIPRLSLE</sequence>
<accession>Q29102</accession>
<protein>
    <recommendedName>
        <fullName>Opalin</fullName>
    </recommendedName>
    <alternativeName>
        <fullName>Oligodendrocytic myelin paranodal and inner loop protein</fullName>
    </alternativeName>
    <alternativeName>
        <fullName>Transmembrane protein 10</fullName>
    </alternativeName>
    <alternativeName>
        <fullName>Transmembrane protein sp83.5</fullName>
    </alternativeName>
</protein>